<dbReference type="EC" id="2.7.7.23" evidence="1"/>
<dbReference type="EC" id="2.3.1.157" evidence="1"/>
<dbReference type="EMBL" id="CP001615">
    <property type="protein sequence ID" value="ACQ70614.1"/>
    <property type="molecule type" value="Genomic_DNA"/>
</dbReference>
<dbReference type="RefSeq" id="WP_012727732.1">
    <property type="nucleotide sequence ID" value="NC_012673.1"/>
</dbReference>
<dbReference type="SMR" id="C4KZV1"/>
<dbReference type="STRING" id="360911.EAT1b_1688"/>
<dbReference type="GeneID" id="94370683"/>
<dbReference type="KEGG" id="eat:EAT1b_1688"/>
<dbReference type="eggNOG" id="COG1207">
    <property type="taxonomic scope" value="Bacteria"/>
</dbReference>
<dbReference type="HOGENOM" id="CLU_029499_15_2_9"/>
<dbReference type="OrthoDB" id="9775031at2"/>
<dbReference type="UniPathway" id="UPA00113">
    <property type="reaction ID" value="UER00532"/>
</dbReference>
<dbReference type="UniPathway" id="UPA00113">
    <property type="reaction ID" value="UER00533"/>
</dbReference>
<dbReference type="UniPathway" id="UPA00973"/>
<dbReference type="Proteomes" id="UP000000716">
    <property type="component" value="Chromosome"/>
</dbReference>
<dbReference type="GO" id="GO:0005737">
    <property type="term" value="C:cytoplasm"/>
    <property type="evidence" value="ECO:0007669"/>
    <property type="project" value="UniProtKB-SubCell"/>
</dbReference>
<dbReference type="GO" id="GO:0016020">
    <property type="term" value="C:membrane"/>
    <property type="evidence" value="ECO:0007669"/>
    <property type="project" value="GOC"/>
</dbReference>
<dbReference type="GO" id="GO:0019134">
    <property type="term" value="F:glucosamine-1-phosphate N-acetyltransferase activity"/>
    <property type="evidence" value="ECO:0007669"/>
    <property type="project" value="UniProtKB-UniRule"/>
</dbReference>
<dbReference type="GO" id="GO:0000287">
    <property type="term" value="F:magnesium ion binding"/>
    <property type="evidence" value="ECO:0007669"/>
    <property type="project" value="UniProtKB-UniRule"/>
</dbReference>
<dbReference type="GO" id="GO:0003977">
    <property type="term" value="F:UDP-N-acetylglucosamine diphosphorylase activity"/>
    <property type="evidence" value="ECO:0007669"/>
    <property type="project" value="UniProtKB-UniRule"/>
</dbReference>
<dbReference type="GO" id="GO:0000902">
    <property type="term" value="P:cell morphogenesis"/>
    <property type="evidence" value="ECO:0007669"/>
    <property type="project" value="UniProtKB-UniRule"/>
</dbReference>
<dbReference type="GO" id="GO:0071555">
    <property type="term" value="P:cell wall organization"/>
    <property type="evidence" value="ECO:0007669"/>
    <property type="project" value="UniProtKB-KW"/>
</dbReference>
<dbReference type="GO" id="GO:0009245">
    <property type="term" value="P:lipid A biosynthetic process"/>
    <property type="evidence" value="ECO:0007669"/>
    <property type="project" value="UniProtKB-UniRule"/>
</dbReference>
<dbReference type="GO" id="GO:0009252">
    <property type="term" value="P:peptidoglycan biosynthetic process"/>
    <property type="evidence" value="ECO:0007669"/>
    <property type="project" value="UniProtKB-UniRule"/>
</dbReference>
<dbReference type="GO" id="GO:0008360">
    <property type="term" value="P:regulation of cell shape"/>
    <property type="evidence" value="ECO:0007669"/>
    <property type="project" value="UniProtKB-KW"/>
</dbReference>
<dbReference type="GO" id="GO:0006048">
    <property type="term" value="P:UDP-N-acetylglucosamine biosynthetic process"/>
    <property type="evidence" value="ECO:0007669"/>
    <property type="project" value="UniProtKB-UniPathway"/>
</dbReference>
<dbReference type="CDD" id="cd02540">
    <property type="entry name" value="GT2_GlmU_N_bac"/>
    <property type="match status" value="1"/>
</dbReference>
<dbReference type="CDD" id="cd03353">
    <property type="entry name" value="LbH_GlmU_C"/>
    <property type="match status" value="1"/>
</dbReference>
<dbReference type="Gene3D" id="2.160.10.10">
    <property type="entry name" value="Hexapeptide repeat proteins"/>
    <property type="match status" value="1"/>
</dbReference>
<dbReference type="Gene3D" id="3.90.550.10">
    <property type="entry name" value="Spore Coat Polysaccharide Biosynthesis Protein SpsA, Chain A"/>
    <property type="match status" value="1"/>
</dbReference>
<dbReference type="HAMAP" id="MF_01631">
    <property type="entry name" value="GlmU"/>
    <property type="match status" value="1"/>
</dbReference>
<dbReference type="InterPro" id="IPR005882">
    <property type="entry name" value="Bifunctional_GlmU"/>
</dbReference>
<dbReference type="InterPro" id="IPR050065">
    <property type="entry name" value="GlmU-like"/>
</dbReference>
<dbReference type="InterPro" id="IPR038009">
    <property type="entry name" value="GlmU_C_LbH"/>
</dbReference>
<dbReference type="InterPro" id="IPR001451">
    <property type="entry name" value="Hexapep"/>
</dbReference>
<dbReference type="InterPro" id="IPR018357">
    <property type="entry name" value="Hexapep_transf_CS"/>
</dbReference>
<dbReference type="InterPro" id="IPR005835">
    <property type="entry name" value="NTP_transferase_dom"/>
</dbReference>
<dbReference type="InterPro" id="IPR029044">
    <property type="entry name" value="Nucleotide-diphossugar_trans"/>
</dbReference>
<dbReference type="InterPro" id="IPR011004">
    <property type="entry name" value="Trimer_LpxA-like_sf"/>
</dbReference>
<dbReference type="NCBIfam" id="TIGR01173">
    <property type="entry name" value="glmU"/>
    <property type="match status" value="1"/>
</dbReference>
<dbReference type="NCBIfam" id="NF010934">
    <property type="entry name" value="PRK14354.1"/>
    <property type="match status" value="1"/>
</dbReference>
<dbReference type="PANTHER" id="PTHR43584:SF3">
    <property type="entry name" value="BIFUNCTIONAL PROTEIN GLMU"/>
    <property type="match status" value="1"/>
</dbReference>
<dbReference type="PANTHER" id="PTHR43584">
    <property type="entry name" value="NUCLEOTIDYL TRANSFERASE"/>
    <property type="match status" value="1"/>
</dbReference>
<dbReference type="Pfam" id="PF00132">
    <property type="entry name" value="Hexapep"/>
    <property type="match status" value="2"/>
</dbReference>
<dbReference type="Pfam" id="PF00483">
    <property type="entry name" value="NTP_transferase"/>
    <property type="match status" value="1"/>
</dbReference>
<dbReference type="SUPFAM" id="SSF53448">
    <property type="entry name" value="Nucleotide-diphospho-sugar transferases"/>
    <property type="match status" value="1"/>
</dbReference>
<dbReference type="SUPFAM" id="SSF51161">
    <property type="entry name" value="Trimeric LpxA-like enzymes"/>
    <property type="match status" value="1"/>
</dbReference>
<dbReference type="PROSITE" id="PS00101">
    <property type="entry name" value="HEXAPEP_TRANSFERASES"/>
    <property type="match status" value="1"/>
</dbReference>
<accession>C4KZV1</accession>
<reference key="1">
    <citation type="journal article" date="2011" name="J. Bacteriol.">
        <title>Complete genome sequence of the Thermophilic Bacterium Exiguobacterium sp. AT1b.</title>
        <authorList>
            <person name="Vishnivetskaya T.A."/>
            <person name="Lucas S."/>
            <person name="Copeland A."/>
            <person name="Lapidus A."/>
            <person name="Glavina del Rio T."/>
            <person name="Dalin E."/>
            <person name="Tice H."/>
            <person name="Bruce D.C."/>
            <person name="Goodwin L.A."/>
            <person name="Pitluck S."/>
            <person name="Saunders E."/>
            <person name="Brettin T."/>
            <person name="Detter C."/>
            <person name="Han C."/>
            <person name="Larimer F."/>
            <person name="Land M.L."/>
            <person name="Hauser L.J."/>
            <person name="Kyrpides N.C."/>
            <person name="Ovchinnikova G."/>
            <person name="Kathariou S."/>
            <person name="Ramaley R.F."/>
            <person name="Rodrigues D.F."/>
            <person name="Hendrix C."/>
            <person name="Richardson P."/>
            <person name="Tiedje J.M."/>
        </authorList>
    </citation>
    <scope>NUCLEOTIDE SEQUENCE [LARGE SCALE GENOMIC DNA]</scope>
    <source>
        <strain>ATCC BAA-1283 / AT1b</strain>
    </source>
</reference>
<name>GLMU_EXISA</name>
<keyword id="KW-0012">Acyltransferase</keyword>
<keyword id="KW-0133">Cell shape</keyword>
<keyword id="KW-0961">Cell wall biogenesis/degradation</keyword>
<keyword id="KW-0963">Cytoplasm</keyword>
<keyword id="KW-0460">Magnesium</keyword>
<keyword id="KW-0479">Metal-binding</keyword>
<keyword id="KW-0511">Multifunctional enzyme</keyword>
<keyword id="KW-0548">Nucleotidyltransferase</keyword>
<keyword id="KW-0573">Peptidoglycan synthesis</keyword>
<keyword id="KW-0677">Repeat</keyword>
<keyword id="KW-0808">Transferase</keyword>
<gene>
    <name evidence="1" type="primary">glmU</name>
    <name type="ordered locus">EAT1b_1688</name>
</gene>
<comment type="function">
    <text evidence="1">Catalyzes the last two sequential reactions in the de novo biosynthetic pathway for UDP-N-acetylglucosamine (UDP-GlcNAc). The C-terminal domain catalyzes the transfer of acetyl group from acetyl coenzyme A to glucosamine-1-phosphate (GlcN-1-P) to produce N-acetylglucosamine-1-phosphate (GlcNAc-1-P), which is converted into UDP-GlcNAc by the transfer of uridine 5-monophosphate (from uridine 5-triphosphate), a reaction catalyzed by the N-terminal domain.</text>
</comment>
<comment type="catalytic activity">
    <reaction evidence="1">
        <text>alpha-D-glucosamine 1-phosphate + acetyl-CoA = N-acetyl-alpha-D-glucosamine 1-phosphate + CoA + H(+)</text>
        <dbReference type="Rhea" id="RHEA:13725"/>
        <dbReference type="ChEBI" id="CHEBI:15378"/>
        <dbReference type="ChEBI" id="CHEBI:57287"/>
        <dbReference type="ChEBI" id="CHEBI:57288"/>
        <dbReference type="ChEBI" id="CHEBI:57776"/>
        <dbReference type="ChEBI" id="CHEBI:58516"/>
        <dbReference type="EC" id="2.3.1.157"/>
    </reaction>
</comment>
<comment type="catalytic activity">
    <reaction evidence="1">
        <text>N-acetyl-alpha-D-glucosamine 1-phosphate + UTP + H(+) = UDP-N-acetyl-alpha-D-glucosamine + diphosphate</text>
        <dbReference type="Rhea" id="RHEA:13509"/>
        <dbReference type="ChEBI" id="CHEBI:15378"/>
        <dbReference type="ChEBI" id="CHEBI:33019"/>
        <dbReference type="ChEBI" id="CHEBI:46398"/>
        <dbReference type="ChEBI" id="CHEBI:57705"/>
        <dbReference type="ChEBI" id="CHEBI:57776"/>
        <dbReference type="EC" id="2.7.7.23"/>
    </reaction>
</comment>
<comment type="cofactor">
    <cofactor evidence="1">
        <name>Mg(2+)</name>
        <dbReference type="ChEBI" id="CHEBI:18420"/>
    </cofactor>
    <text evidence="1">Binds 1 Mg(2+) ion per subunit.</text>
</comment>
<comment type="pathway">
    <text evidence="1">Nucleotide-sugar biosynthesis; UDP-N-acetyl-alpha-D-glucosamine biosynthesis; N-acetyl-alpha-D-glucosamine 1-phosphate from alpha-D-glucosamine 6-phosphate (route II): step 2/2.</text>
</comment>
<comment type="pathway">
    <text evidence="1">Nucleotide-sugar biosynthesis; UDP-N-acetyl-alpha-D-glucosamine biosynthesis; UDP-N-acetyl-alpha-D-glucosamine from N-acetyl-alpha-D-glucosamine 1-phosphate: step 1/1.</text>
</comment>
<comment type="pathway">
    <text evidence="1">Bacterial outer membrane biogenesis; LPS lipid A biosynthesis.</text>
</comment>
<comment type="subunit">
    <text evidence="1">Homotrimer.</text>
</comment>
<comment type="subcellular location">
    <subcellularLocation>
        <location evidence="1">Cytoplasm</location>
    </subcellularLocation>
</comment>
<comment type="similarity">
    <text evidence="1">In the N-terminal section; belongs to the N-acetylglucosamine-1-phosphate uridyltransferase family.</text>
</comment>
<comment type="similarity">
    <text evidence="1">In the C-terminal section; belongs to the transferase hexapeptide repeat family.</text>
</comment>
<feature type="chain" id="PRO_1000215773" description="Bifunctional protein GlmU">
    <location>
        <begin position="1"/>
        <end position="451"/>
    </location>
</feature>
<feature type="region of interest" description="Pyrophosphorylase" evidence="1">
    <location>
        <begin position="1"/>
        <end position="229"/>
    </location>
</feature>
<feature type="region of interest" description="Linker" evidence="1">
    <location>
        <begin position="230"/>
        <end position="250"/>
    </location>
</feature>
<feature type="region of interest" description="N-acetyltransferase" evidence="1">
    <location>
        <begin position="251"/>
        <end position="451"/>
    </location>
</feature>
<feature type="active site" description="Proton acceptor" evidence="1">
    <location>
        <position position="362"/>
    </location>
</feature>
<feature type="binding site" evidence="1">
    <location>
        <begin position="8"/>
        <end position="11"/>
    </location>
    <ligand>
        <name>UDP-N-acetyl-alpha-D-glucosamine</name>
        <dbReference type="ChEBI" id="CHEBI:57705"/>
    </ligand>
</feature>
<feature type="binding site" evidence="1">
    <location>
        <position position="22"/>
    </location>
    <ligand>
        <name>UDP-N-acetyl-alpha-D-glucosamine</name>
        <dbReference type="ChEBI" id="CHEBI:57705"/>
    </ligand>
</feature>
<feature type="binding site" evidence="1">
    <location>
        <position position="72"/>
    </location>
    <ligand>
        <name>UDP-N-acetyl-alpha-D-glucosamine</name>
        <dbReference type="ChEBI" id="CHEBI:57705"/>
    </ligand>
</feature>
<feature type="binding site" evidence="1">
    <location>
        <begin position="77"/>
        <end position="78"/>
    </location>
    <ligand>
        <name>UDP-N-acetyl-alpha-D-glucosamine</name>
        <dbReference type="ChEBI" id="CHEBI:57705"/>
    </ligand>
</feature>
<feature type="binding site" evidence="1">
    <location>
        <position position="102"/>
    </location>
    <ligand>
        <name>Mg(2+)</name>
        <dbReference type="ChEBI" id="CHEBI:18420"/>
    </ligand>
</feature>
<feature type="binding site" evidence="1">
    <location>
        <position position="139"/>
    </location>
    <ligand>
        <name>UDP-N-acetyl-alpha-D-glucosamine</name>
        <dbReference type="ChEBI" id="CHEBI:57705"/>
    </ligand>
</feature>
<feature type="binding site" evidence="1">
    <location>
        <position position="154"/>
    </location>
    <ligand>
        <name>UDP-N-acetyl-alpha-D-glucosamine</name>
        <dbReference type="ChEBI" id="CHEBI:57705"/>
    </ligand>
</feature>
<feature type="binding site" evidence="1">
    <location>
        <position position="169"/>
    </location>
    <ligand>
        <name>UDP-N-acetyl-alpha-D-glucosamine</name>
        <dbReference type="ChEBI" id="CHEBI:57705"/>
    </ligand>
</feature>
<feature type="binding site" evidence="1">
    <location>
        <position position="227"/>
    </location>
    <ligand>
        <name>Mg(2+)</name>
        <dbReference type="ChEBI" id="CHEBI:18420"/>
    </ligand>
</feature>
<feature type="binding site" evidence="1">
    <location>
        <position position="227"/>
    </location>
    <ligand>
        <name>UDP-N-acetyl-alpha-D-glucosamine</name>
        <dbReference type="ChEBI" id="CHEBI:57705"/>
    </ligand>
</feature>
<feature type="binding site" evidence="1">
    <location>
        <position position="332"/>
    </location>
    <ligand>
        <name>UDP-N-acetyl-alpha-D-glucosamine</name>
        <dbReference type="ChEBI" id="CHEBI:57705"/>
    </ligand>
</feature>
<feature type="binding site" evidence="1">
    <location>
        <position position="350"/>
    </location>
    <ligand>
        <name>UDP-N-acetyl-alpha-D-glucosamine</name>
        <dbReference type="ChEBI" id="CHEBI:57705"/>
    </ligand>
</feature>
<feature type="binding site" evidence="1">
    <location>
        <position position="365"/>
    </location>
    <ligand>
        <name>UDP-N-acetyl-alpha-D-glucosamine</name>
        <dbReference type="ChEBI" id="CHEBI:57705"/>
    </ligand>
</feature>
<feature type="binding site" evidence="1">
    <location>
        <position position="376"/>
    </location>
    <ligand>
        <name>UDP-N-acetyl-alpha-D-glucosamine</name>
        <dbReference type="ChEBI" id="CHEBI:57705"/>
    </ligand>
</feature>
<feature type="binding site" evidence="1">
    <location>
        <begin position="385"/>
        <end position="386"/>
    </location>
    <ligand>
        <name>acetyl-CoA</name>
        <dbReference type="ChEBI" id="CHEBI:57288"/>
    </ligand>
</feature>
<feature type="binding site" evidence="1">
    <location>
        <position position="422"/>
    </location>
    <ligand>
        <name>acetyl-CoA</name>
        <dbReference type="ChEBI" id="CHEBI:57288"/>
    </ligand>
</feature>
<feature type="binding site" evidence="1">
    <location>
        <position position="439"/>
    </location>
    <ligand>
        <name>acetyl-CoA</name>
        <dbReference type="ChEBI" id="CHEBI:57288"/>
    </ligand>
</feature>
<sequence length="451" mass="47951">MERFAVILAAGKGTRMKSKLYKVLHPVLGKPMVEHVVDQLDQIGVSRQIVIVGHGAEAVQDTLGTRVEYAVQEEQLGTGHAVQMAEAELAGKSGATLVVCGDTPLLTAETLEALLAHHEAQQAKVTVLTAIADDATGYGRVVRGEDGNVTKVVEHKDASEAELAINEINTGTYVFDNELLFDALKQVGNNNAQGEYYLPDVISIAKEAGEVVAAHTAPTFDETIGVNDRVALSQAEAIMRKRTNERLMREGVTFMDPASTYISPDVVIGSDTVIYPGTVILGKTTIGSECVIGPNSDIRNSVIEDHAVVRQSVVTDSRIGEAAQVGPFAHLRQQAVLGANTRVGNFVEIKKSTFGDGAKASHLSYIGDASIGERVNLGCGSITVNYDGKNKFETVVEDDAFVGCNVNLIAPVKVGKGAIVAAGSTITSDVPEEALAIARERQTNKEGYTKR</sequence>
<organism>
    <name type="scientific">Exiguobacterium sp. (strain ATCC BAA-1283 / AT1b)</name>
    <dbReference type="NCBI Taxonomy" id="360911"/>
    <lineage>
        <taxon>Bacteria</taxon>
        <taxon>Bacillati</taxon>
        <taxon>Bacillota</taxon>
        <taxon>Bacilli</taxon>
        <taxon>Bacillales</taxon>
        <taxon>Bacillales Family XII. Incertae Sedis</taxon>
        <taxon>Exiguobacterium</taxon>
    </lineage>
</organism>
<protein>
    <recommendedName>
        <fullName evidence="1">Bifunctional protein GlmU</fullName>
    </recommendedName>
    <domain>
        <recommendedName>
            <fullName evidence="1">UDP-N-acetylglucosamine pyrophosphorylase</fullName>
            <ecNumber evidence="1">2.7.7.23</ecNumber>
        </recommendedName>
        <alternativeName>
            <fullName evidence="1">N-acetylglucosamine-1-phosphate uridyltransferase</fullName>
        </alternativeName>
    </domain>
    <domain>
        <recommendedName>
            <fullName evidence="1">Glucosamine-1-phosphate N-acetyltransferase</fullName>
            <ecNumber evidence="1">2.3.1.157</ecNumber>
        </recommendedName>
    </domain>
</protein>
<evidence type="ECO:0000255" key="1">
    <source>
        <dbReference type="HAMAP-Rule" id="MF_01631"/>
    </source>
</evidence>
<proteinExistence type="inferred from homology"/>